<sequence>MHTLIERLEKVTNSKELEEARLNALGKKGVFADKFNQLKNLNGEEKNAFAKEIHHYKQAFEKAFEWKKKAILELELEERLKKEKIDVSLFNAIKTSSSHPLNYTKNKIIEFFTPLGYKLEIGSLVEDDFHNFSALNLPPYHPARDMQDTFYFKDHKLLRTHTSPVQIHTMQEQTPPIKMICLGETFRRDYDLTHTPMFHQIEGLVVDQKGNIRFTHLKGVIEDFLHYFFGGVQLRWRSSFFPFTEPSAEVDISCVFCKQEGCRVCSHTGWLEVLGCGMVNNAVFEAIGYENVSGFAFGMGIERLAMLTCQINDLRSFFETDLRVLESF</sequence>
<reference key="1">
    <citation type="journal article" date="2006" name="Proc. Natl. Acad. Sci. U.S.A.">
        <title>The complete genome sequence of a chronic atrophic gastritis Helicobacter pylori strain: evolution during disease progression.</title>
        <authorList>
            <person name="Oh J.D."/>
            <person name="Kling-Baeckhed H."/>
            <person name="Giannakis M."/>
            <person name="Xu J."/>
            <person name="Fulton R.S."/>
            <person name="Fulton L.A."/>
            <person name="Cordum H.S."/>
            <person name="Wang C."/>
            <person name="Elliott G."/>
            <person name="Edwards J."/>
            <person name="Mardis E.R."/>
            <person name="Engstrand L.G."/>
            <person name="Gordon J.I."/>
        </authorList>
    </citation>
    <scope>NUCLEOTIDE SEQUENCE [LARGE SCALE GENOMIC DNA]</scope>
    <source>
        <strain>HPAG1</strain>
    </source>
</reference>
<name>SYFA_HELPH</name>
<organism>
    <name type="scientific">Helicobacter pylori (strain HPAG1)</name>
    <dbReference type="NCBI Taxonomy" id="357544"/>
    <lineage>
        <taxon>Bacteria</taxon>
        <taxon>Pseudomonadati</taxon>
        <taxon>Campylobacterota</taxon>
        <taxon>Epsilonproteobacteria</taxon>
        <taxon>Campylobacterales</taxon>
        <taxon>Helicobacteraceae</taxon>
        <taxon>Helicobacter</taxon>
    </lineage>
</organism>
<proteinExistence type="inferred from homology"/>
<comment type="catalytic activity">
    <reaction evidence="1">
        <text>tRNA(Phe) + L-phenylalanine + ATP = L-phenylalanyl-tRNA(Phe) + AMP + diphosphate + H(+)</text>
        <dbReference type="Rhea" id="RHEA:19413"/>
        <dbReference type="Rhea" id="RHEA-COMP:9668"/>
        <dbReference type="Rhea" id="RHEA-COMP:9699"/>
        <dbReference type="ChEBI" id="CHEBI:15378"/>
        <dbReference type="ChEBI" id="CHEBI:30616"/>
        <dbReference type="ChEBI" id="CHEBI:33019"/>
        <dbReference type="ChEBI" id="CHEBI:58095"/>
        <dbReference type="ChEBI" id="CHEBI:78442"/>
        <dbReference type="ChEBI" id="CHEBI:78531"/>
        <dbReference type="ChEBI" id="CHEBI:456215"/>
        <dbReference type="EC" id="6.1.1.20"/>
    </reaction>
</comment>
<comment type="cofactor">
    <cofactor evidence="1">
        <name>Mg(2+)</name>
        <dbReference type="ChEBI" id="CHEBI:18420"/>
    </cofactor>
    <text evidence="1">Binds 2 magnesium ions per tetramer.</text>
</comment>
<comment type="subunit">
    <text evidence="1">Tetramer of two alpha and two beta subunits.</text>
</comment>
<comment type="subcellular location">
    <subcellularLocation>
        <location evidence="1">Cytoplasm</location>
    </subcellularLocation>
</comment>
<comment type="similarity">
    <text evidence="1">Belongs to the class-II aminoacyl-tRNA synthetase family. Phe-tRNA synthetase alpha subunit type 1 subfamily.</text>
</comment>
<dbReference type="EC" id="6.1.1.20" evidence="1"/>
<dbReference type="EMBL" id="CP000241">
    <property type="protein sequence ID" value="ABF85056.1"/>
    <property type="molecule type" value="Genomic_DNA"/>
</dbReference>
<dbReference type="RefSeq" id="WP_000557065.1">
    <property type="nucleotide sequence ID" value="NC_008086.1"/>
</dbReference>
<dbReference type="SMR" id="Q1CSL6"/>
<dbReference type="KEGG" id="hpa:HPAG1_0989"/>
<dbReference type="HOGENOM" id="CLU_025086_0_1_7"/>
<dbReference type="GO" id="GO:0005737">
    <property type="term" value="C:cytoplasm"/>
    <property type="evidence" value="ECO:0007669"/>
    <property type="project" value="UniProtKB-SubCell"/>
</dbReference>
<dbReference type="GO" id="GO:0005524">
    <property type="term" value="F:ATP binding"/>
    <property type="evidence" value="ECO:0007669"/>
    <property type="project" value="UniProtKB-UniRule"/>
</dbReference>
<dbReference type="GO" id="GO:0000287">
    <property type="term" value="F:magnesium ion binding"/>
    <property type="evidence" value="ECO:0007669"/>
    <property type="project" value="UniProtKB-UniRule"/>
</dbReference>
<dbReference type="GO" id="GO:0004826">
    <property type="term" value="F:phenylalanine-tRNA ligase activity"/>
    <property type="evidence" value="ECO:0007669"/>
    <property type="project" value="UniProtKB-UniRule"/>
</dbReference>
<dbReference type="GO" id="GO:0000049">
    <property type="term" value="F:tRNA binding"/>
    <property type="evidence" value="ECO:0007669"/>
    <property type="project" value="InterPro"/>
</dbReference>
<dbReference type="GO" id="GO:0006432">
    <property type="term" value="P:phenylalanyl-tRNA aminoacylation"/>
    <property type="evidence" value="ECO:0007669"/>
    <property type="project" value="UniProtKB-UniRule"/>
</dbReference>
<dbReference type="CDD" id="cd00496">
    <property type="entry name" value="PheRS_alpha_core"/>
    <property type="match status" value="1"/>
</dbReference>
<dbReference type="FunFam" id="3.30.930.10:FF:000127">
    <property type="entry name" value="Phenylalanine--tRNA ligase alpha subunit"/>
    <property type="match status" value="1"/>
</dbReference>
<dbReference type="Gene3D" id="3.30.930.10">
    <property type="entry name" value="Bira Bifunctional Protein, Domain 2"/>
    <property type="match status" value="1"/>
</dbReference>
<dbReference type="HAMAP" id="MF_00281">
    <property type="entry name" value="Phe_tRNA_synth_alpha1"/>
    <property type="match status" value="1"/>
</dbReference>
<dbReference type="InterPro" id="IPR006195">
    <property type="entry name" value="aa-tRNA-synth_II"/>
</dbReference>
<dbReference type="InterPro" id="IPR045864">
    <property type="entry name" value="aa-tRNA-synth_II/BPL/LPL"/>
</dbReference>
<dbReference type="InterPro" id="IPR004529">
    <property type="entry name" value="Phe-tRNA-synth_IIc_asu"/>
</dbReference>
<dbReference type="InterPro" id="IPR004188">
    <property type="entry name" value="Phe-tRNA_ligase_II_N"/>
</dbReference>
<dbReference type="InterPro" id="IPR022911">
    <property type="entry name" value="Phe_tRNA_ligase_alpha1_bac"/>
</dbReference>
<dbReference type="InterPro" id="IPR002319">
    <property type="entry name" value="Phenylalanyl-tRNA_Synthase"/>
</dbReference>
<dbReference type="InterPro" id="IPR010978">
    <property type="entry name" value="tRNA-bd_arm"/>
</dbReference>
<dbReference type="NCBIfam" id="TIGR00468">
    <property type="entry name" value="pheS"/>
    <property type="match status" value="1"/>
</dbReference>
<dbReference type="PANTHER" id="PTHR11538:SF41">
    <property type="entry name" value="PHENYLALANINE--TRNA LIGASE, MITOCHONDRIAL"/>
    <property type="match status" value="1"/>
</dbReference>
<dbReference type="PANTHER" id="PTHR11538">
    <property type="entry name" value="PHENYLALANYL-TRNA SYNTHETASE"/>
    <property type="match status" value="1"/>
</dbReference>
<dbReference type="Pfam" id="PF02912">
    <property type="entry name" value="Phe_tRNA-synt_N"/>
    <property type="match status" value="1"/>
</dbReference>
<dbReference type="Pfam" id="PF01409">
    <property type="entry name" value="tRNA-synt_2d"/>
    <property type="match status" value="1"/>
</dbReference>
<dbReference type="SUPFAM" id="SSF55681">
    <property type="entry name" value="Class II aaRS and biotin synthetases"/>
    <property type="match status" value="1"/>
</dbReference>
<dbReference type="SUPFAM" id="SSF46589">
    <property type="entry name" value="tRNA-binding arm"/>
    <property type="match status" value="1"/>
</dbReference>
<dbReference type="PROSITE" id="PS50862">
    <property type="entry name" value="AA_TRNA_LIGASE_II"/>
    <property type="match status" value="1"/>
</dbReference>
<gene>
    <name evidence="1" type="primary">pheS</name>
    <name type="ordered locus">HPAG1_0989</name>
</gene>
<accession>Q1CSL6</accession>
<feature type="chain" id="PRO_1000006842" description="Phenylalanine--tRNA ligase alpha subunit">
    <location>
        <begin position="1"/>
        <end position="328"/>
    </location>
</feature>
<feature type="binding site" evidence="1">
    <location>
        <position position="245"/>
    </location>
    <ligand>
        <name>Mg(2+)</name>
        <dbReference type="ChEBI" id="CHEBI:18420"/>
        <note>shared with beta subunit</note>
    </ligand>
</feature>
<evidence type="ECO:0000255" key="1">
    <source>
        <dbReference type="HAMAP-Rule" id="MF_00281"/>
    </source>
</evidence>
<keyword id="KW-0030">Aminoacyl-tRNA synthetase</keyword>
<keyword id="KW-0067">ATP-binding</keyword>
<keyword id="KW-0963">Cytoplasm</keyword>
<keyword id="KW-0436">Ligase</keyword>
<keyword id="KW-0460">Magnesium</keyword>
<keyword id="KW-0479">Metal-binding</keyword>
<keyword id="KW-0547">Nucleotide-binding</keyword>
<keyword id="KW-0648">Protein biosynthesis</keyword>
<protein>
    <recommendedName>
        <fullName evidence="1">Phenylalanine--tRNA ligase alpha subunit</fullName>
        <ecNumber evidence="1">6.1.1.20</ecNumber>
    </recommendedName>
    <alternativeName>
        <fullName evidence="1">Phenylalanyl-tRNA synthetase alpha subunit</fullName>
        <shortName evidence="1">PheRS</shortName>
    </alternativeName>
</protein>